<gene>
    <name type="ordered locus">YPO1442</name>
    <name type="ordered locus">y2728</name>
    <name type="ordered locus">YP_1333</name>
</gene>
<keyword id="KW-1185">Reference proteome</keyword>
<keyword id="KW-0732">Signal</keyword>
<dbReference type="EMBL" id="AL590842">
    <property type="protein sequence ID" value="CAL20093.1"/>
    <property type="molecule type" value="Genomic_DNA"/>
</dbReference>
<dbReference type="EMBL" id="AE009952">
    <property type="protein sequence ID" value="AAM86280.1"/>
    <property type="molecule type" value="Genomic_DNA"/>
</dbReference>
<dbReference type="EMBL" id="AE017042">
    <property type="protein sequence ID" value="AAS61576.1"/>
    <property type="molecule type" value="Genomic_DNA"/>
</dbReference>
<dbReference type="PIR" id="AC0176">
    <property type="entry name" value="AC0176"/>
</dbReference>
<dbReference type="RefSeq" id="WP_002213058.1">
    <property type="nucleotide sequence ID" value="NZ_WUCM01000066.1"/>
</dbReference>
<dbReference type="RefSeq" id="YP_002346463.1">
    <property type="nucleotide sequence ID" value="NC_003143.1"/>
</dbReference>
<dbReference type="STRING" id="214092.YPO1442"/>
<dbReference type="PaxDb" id="214092-YPO1442"/>
<dbReference type="DNASU" id="1147675"/>
<dbReference type="EnsemblBacteria" id="AAS61576">
    <property type="protein sequence ID" value="AAS61576"/>
    <property type="gene ID" value="YP_1333"/>
</dbReference>
<dbReference type="KEGG" id="ype:YPO1442"/>
<dbReference type="KEGG" id="ypk:y2728"/>
<dbReference type="KEGG" id="ypm:YP_1333"/>
<dbReference type="PATRIC" id="fig|214092.21.peg.1768"/>
<dbReference type="eggNOG" id="COG3110">
    <property type="taxonomic scope" value="Bacteria"/>
</dbReference>
<dbReference type="HOGENOM" id="CLU_073782_2_0_6"/>
<dbReference type="OMA" id="MQIGRDY"/>
<dbReference type="OrthoDB" id="6428208at2"/>
<dbReference type="Proteomes" id="UP000000815">
    <property type="component" value="Chromosome"/>
</dbReference>
<dbReference type="Proteomes" id="UP000001019">
    <property type="component" value="Chromosome"/>
</dbReference>
<dbReference type="Proteomes" id="UP000002490">
    <property type="component" value="Chromosome"/>
</dbReference>
<dbReference type="HAMAP" id="MF_00789">
    <property type="entry name" value="UPF0319"/>
    <property type="match status" value="1"/>
</dbReference>
<dbReference type="InterPro" id="IPR018635">
    <property type="entry name" value="UPF0319"/>
</dbReference>
<dbReference type="NCBIfam" id="NF002967">
    <property type="entry name" value="PRK03641.1"/>
    <property type="match status" value="1"/>
</dbReference>
<dbReference type="PANTHER" id="PTHR38108">
    <property type="entry name" value="UPF0319 PROTEIN YCCT"/>
    <property type="match status" value="1"/>
</dbReference>
<dbReference type="PANTHER" id="PTHR38108:SF1">
    <property type="entry name" value="UPF0319 PROTEIN YCCT"/>
    <property type="match status" value="1"/>
</dbReference>
<dbReference type="Pfam" id="PF09829">
    <property type="entry name" value="DUF2057"/>
    <property type="match status" value="1"/>
</dbReference>
<evidence type="ECO:0000255" key="1">
    <source>
        <dbReference type="HAMAP-Rule" id="MF_00789"/>
    </source>
</evidence>
<sequence length="226" mass="24613">MKLGLVAGMLAVCFSFSSVAMTLKLTPEIDLLVVDGKNMSGSLLKGADSLELNSGMHQILFKVIKPLPTDPLVLYSSPPLIVVFNAHNTRSVAIKLPVINTLRDGHQFSKNPLYQLIGDNGHPLSVRHDVLRQDHLNNSTTLETVMAAYNVGKYNASVPAFAAIPPSPVSAVPGTTIPVAGVNTPHKTASLQGENVTEQMLQYWFLQANPETQKRFLIWAKKQPIH</sequence>
<reference key="1">
    <citation type="journal article" date="2001" name="Nature">
        <title>Genome sequence of Yersinia pestis, the causative agent of plague.</title>
        <authorList>
            <person name="Parkhill J."/>
            <person name="Wren B.W."/>
            <person name="Thomson N.R."/>
            <person name="Titball R.W."/>
            <person name="Holden M.T.G."/>
            <person name="Prentice M.B."/>
            <person name="Sebaihia M."/>
            <person name="James K.D."/>
            <person name="Churcher C.M."/>
            <person name="Mungall K.L."/>
            <person name="Baker S."/>
            <person name="Basham D."/>
            <person name="Bentley S.D."/>
            <person name="Brooks K."/>
            <person name="Cerdeno-Tarraga A.-M."/>
            <person name="Chillingworth T."/>
            <person name="Cronin A."/>
            <person name="Davies R.M."/>
            <person name="Davis P."/>
            <person name="Dougan G."/>
            <person name="Feltwell T."/>
            <person name="Hamlin N."/>
            <person name="Holroyd S."/>
            <person name="Jagels K."/>
            <person name="Karlyshev A.V."/>
            <person name="Leather S."/>
            <person name="Moule S."/>
            <person name="Oyston P.C.F."/>
            <person name="Quail M.A."/>
            <person name="Rutherford K.M."/>
            <person name="Simmonds M."/>
            <person name="Skelton J."/>
            <person name="Stevens K."/>
            <person name="Whitehead S."/>
            <person name="Barrell B.G."/>
        </authorList>
    </citation>
    <scope>NUCLEOTIDE SEQUENCE [LARGE SCALE GENOMIC DNA]</scope>
    <source>
        <strain>CO-92 / Biovar Orientalis</strain>
    </source>
</reference>
<reference key="2">
    <citation type="journal article" date="2002" name="J. Bacteriol.">
        <title>Genome sequence of Yersinia pestis KIM.</title>
        <authorList>
            <person name="Deng W."/>
            <person name="Burland V."/>
            <person name="Plunkett G. III"/>
            <person name="Boutin A."/>
            <person name="Mayhew G.F."/>
            <person name="Liss P."/>
            <person name="Perna N.T."/>
            <person name="Rose D.J."/>
            <person name="Mau B."/>
            <person name="Zhou S."/>
            <person name="Schwartz D.C."/>
            <person name="Fetherston J.D."/>
            <person name="Lindler L.E."/>
            <person name="Brubaker R.R."/>
            <person name="Plano G.V."/>
            <person name="Straley S.C."/>
            <person name="McDonough K.A."/>
            <person name="Nilles M.L."/>
            <person name="Matson J.S."/>
            <person name="Blattner F.R."/>
            <person name="Perry R.D."/>
        </authorList>
    </citation>
    <scope>NUCLEOTIDE SEQUENCE [LARGE SCALE GENOMIC DNA]</scope>
    <source>
        <strain>KIM10+ / Biovar Mediaevalis</strain>
    </source>
</reference>
<reference key="3">
    <citation type="journal article" date="2004" name="DNA Res.">
        <title>Complete genome sequence of Yersinia pestis strain 91001, an isolate avirulent to humans.</title>
        <authorList>
            <person name="Song Y."/>
            <person name="Tong Z."/>
            <person name="Wang J."/>
            <person name="Wang L."/>
            <person name="Guo Z."/>
            <person name="Han Y."/>
            <person name="Zhang J."/>
            <person name="Pei D."/>
            <person name="Zhou D."/>
            <person name="Qin H."/>
            <person name="Pang X."/>
            <person name="Han Y."/>
            <person name="Zhai J."/>
            <person name="Li M."/>
            <person name="Cui B."/>
            <person name="Qi Z."/>
            <person name="Jin L."/>
            <person name="Dai R."/>
            <person name="Chen F."/>
            <person name="Li S."/>
            <person name="Ye C."/>
            <person name="Du Z."/>
            <person name="Lin W."/>
            <person name="Wang J."/>
            <person name="Yu J."/>
            <person name="Yang H."/>
            <person name="Wang J."/>
            <person name="Huang P."/>
            <person name="Yang R."/>
        </authorList>
    </citation>
    <scope>NUCLEOTIDE SEQUENCE [LARGE SCALE GENOMIC DNA]</scope>
    <source>
        <strain>91001 / Biovar Mediaevalis</strain>
    </source>
</reference>
<comment type="similarity">
    <text evidence="1">Belongs to the UPF0319 family.</text>
</comment>
<proteinExistence type="inferred from homology"/>
<feature type="signal peptide" evidence="1">
    <location>
        <begin position="1"/>
        <end position="20"/>
    </location>
</feature>
<feature type="chain" id="PRO_0000036318" description="UPF0319 protein YPO1442/y2728/YP_1333">
    <location>
        <begin position="21"/>
        <end position="226"/>
    </location>
</feature>
<organism>
    <name type="scientific">Yersinia pestis</name>
    <dbReference type="NCBI Taxonomy" id="632"/>
    <lineage>
        <taxon>Bacteria</taxon>
        <taxon>Pseudomonadati</taxon>
        <taxon>Pseudomonadota</taxon>
        <taxon>Gammaproteobacteria</taxon>
        <taxon>Enterobacterales</taxon>
        <taxon>Yersiniaceae</taxon>
        <taxon>Yersinia</taxon>
    </lineage>
</organism>
<accession>Q8ZG70</accession>
<accession>Q0WGX5</accession>
<protein>
    <recommendedName>
        <fullName evidence="1">UPF0319 protein YPO1442/y2728/YP_1333</fullName>
    </recommendedName>
</protein>
<name>Y1442_YERPE</name>